<proteinExistence type="evidence at transcript level"/>
<comment type="function">
    <text evidence="1">May have a transcription role in testis.</text>
</comment>
<comment type="subcellular location">
    <subcellularLocation>
        <location evidence="2">Nucleus</location>
    </subcellularLocation>
</comment>
<comment type="similarity">
    <text evidence="4">Belongs to the TALE/TGIF homeobox family.</text>
</comment>
<keyword id="KW-0238">DNA-binding</keyword>
<keyword id="KW-0371">Homeobox</keyword>
<keyword id="KW-0539">Nucleus</keyword>
<keyword id="KW-1185">Reference proteome</keyword>
<keyword id="KW-0804">Transcription</keyword>
<keyword id="KW-0805">Transcription regulation</keyword>
<name>TF2LX_GORGO</name>
<sequence length="241" mass="26697">MEAAADGPAETQSPVKKDSPAKTQSPAQDTSIMSRNNADTGRVLALPEHKKKRKGNLPAESVKILRDWMYKHRFKAYPSEEEKQMLSEKTNLSLLQISNWFINARRRILPDMLQQRRNDPIIGHKTGKDAHATHLQSTKASVPAKSGPSGPDNVQSLPLWPLPKGQMSGEKQPDPESAPSQKLTRIAQPKKKVKVSITSPSSPEPVSPEEYADFSSFLLLVDAAVQRAAELELEKKQEPNP</sequence>
<protein>
    <recommendedName>
        <fullName>Homeobox protein TGIF2LX</fullName>
    </recommendedName>
    <alternativeName>
        <fullName>TGF-beta-induced transcription factor 2-like protein</fullName>
    </alternativeName>
    <alternativeName>
        <fullName>TGFB-induced factor 2-like protein, X-linked</fullName>
    </alternativeName>
    <alternativeName>
        <fullName>TGIF-like on the X</fullName>
    </alternativeName>
</protein>
<gene>
    <name type="primary">TGIF2LX</name>
    <name type="synonym">TGIFLX</name>
</gene>
<evidence type="ECO:0000250" key="1"/>
<evidence type="ECO:0000255" key="2">
    <source>
        <dbReference type="PROSITE-ProRule" id="PRU00108"/>
    </source>
</evidence>
<evidence type="ECO:0000256" key="3">
    <source>
        <dbReference type="SAM" id="MobiDB-lite"/>
    </source>
</evidence>
<evidence type="ECO:0000305" key="4"/>
<feature type="chain" id="PRO_0000049323" description="Homeobox protein TGIF2LX">
    <location>
        <begin position="1"/>
        <end position="241"/>
    </location>
</feature>
<feature type="DNA-binding region" description="Homeobox; TALE-type" evidence="2">
    <location>
        <begin position="48"/>
        <end position="111"/>
    </location>
</feature>
<feature type="region of interest" description="Disordered" evidence="3">
    <location>
        <begin position="1"/>
        <end position="58"/>
    </location>
</feature>
<feature type="region of interest" description="Disordered" evidence="3">
    <location>
        <begin position="126"/>
        <end position="209"/>
    </location>
</feature>
<feature type="compositionally biased region" description="Polar residues" evidence="3">
    <location>
        <begin position="21"/>
        <end position="39"/>
    </location>
</feature>
<reference key="1">
    <citation type="submission" date="2001-09" db="EMBL/GenBank/DDBJ databases">
        <title>Characterisation of a TGIF-like protein gene in the human Xq21.3-Yp11.2 homology block.</title>
        <authorList>
            <person name="Blanco-Arias P."/>
        </authorList>
    </citation>
    <scope>NUCLEOTIDE SEQUENCE [MRNA]</scope>
</reference>
<reference key="2">
    <citation type="submission" date="2006-08" db="EMBL/GenBank/DDBJ databases">
        <title>Positive selection in transcription factor genes on the human lineage.</title>
        <authorList>
            <person name="Nickel G.C."/>
            <person name="Tefft D.L."/>
            <person name="Trevarthen K."/>
            <person name="Funt J."/>
            <person name="Adams M.D."/>
        </authorList>
    </citation>
    <scope>NUCLEOTIDE SEQUENCE [GENOMIC DNA]</scope>
</reference>
<organism>
    <name type="scientific">Gorilla gorilla gorilla</name>
    <name type="common">Western lowland gorilla</name>
    <dbReference type="NCBI Taxonomy" id="9595"/>
    <lineage>
        <taxon>Eukaryota</taxon>
        <taxon>Metazoa</taxon>
        <taxon>Chordata</taxon>
        <taxon>Craniata</taxon>
        <taxon>Vertebrata</taxon>
        <taxon>Euteleostomi</taxon>
        <taxon>Mammalia</taxon>
        <taxon>Eutheria</taxon>
        <taxon>Euarchontoglires</taxon>
        <taxon>Primates</taxon>
        <taxon>Haplorrhini</taxon>
        <taxon>Catarrhini</taxon>
        <taxon>Hominidae</taxon>
        <taxon>Gorilla</taxon>
    </lineage>
</organism>
<accession>Q8MIE9</accession>
<accession>A1YF99</accession>
<dbReference type="EMBL" id="AJ345074">
    <property type="protein sequence ID" value="CAC87896.2"/>
    <property type="molecule type" value="mRNA"/>
</dbReference>
<dbReference type="EMBL" id="DQ976544">
    <property type="protein sequence ID" value="ABM46817.1"/>
    <property type="molecule type" value="Genomic_DNA"/>
</dbReference>
<dbReference type="RefSeq" id="NP_001266647.1">
    <property type="nucleotide sequence ID" value="NM_001279718.1"/>
</dbReference>
<dbReference type="RefSeq" id="XP_018874332.1">
    <property type="nucleotide sequence ID" value="XM_019018787.4"/>
</dbReference>
<dbReference type="BMRB" id="Q8MIE9"/>
<dbReference type="SMR" id="Q8MIE9"/>
<dbReference type="FunCoup" id="Q8MIE9">
    <property type="interactions" value="17"/>
</dbReference>
<dbReference type="GeneID" id="101140174"/>
<dbReference type="KEGG" id="ggo:101140174"/>
<dbReference type="CTD" id="90316"/>
<dbReference type="eggNOG" id="KOG0773">
    <property type="taxonomic scope" value="Eukaryota"/>
</dbReference>
<dbReference type="HOGENOM" id="CLU_034318_1_0_1"/>
<dbReference type="InParanoid" id="Q8MIE9"/>
<dbReference type="OrthoDB" id="13398at9604"/>
<dbReference type="Proteomes" id="UP000001519">
    <property type="component" value="Unplaced"/>
</dbReference>
<dbReference type="GO" id="GO:0005634">
    <property type="term" value="C:nucleus"/>
    <property type="evidence" value="ECO:0007669"/>
    <property type="project" value="UniProtKB-SubCell"/>
</dbReference>
<dbReference type="GO" id="GO:0003677">
    <property type="term" value="F:DNA binding"/>
    <property type="evidence" value="ECO:0007669"/>
    <property type="project" value="UniProtKB-KW"/>
</dbReference>
<dbReference type="GO" id="GO:0001227">
    <property type="term" value="F:DNA-binding transcription repressor activity, RNA polymerase II-specific"/>
    <property type="evidence" value="ECO:0000318"/>
    <property type="project" value="GO_Central"/>
</dbReference>
<dbReference type="GO" id="GO:0000122">
    <property type="term" value="P:negative regulation of transcription by RNA polymerase II"/>
    <property type="evidence" value="ECO:0000318"/>
    <property type="project" value="GO_Central"/>
</dbReference>
<dbReference type="CDD" id="cd00086">
    <property type="entry name" value="homeodomain"/>
    <property type="match status" value="1"/>
</dbReference>
<dbReference type="FunFam" id="1.10.10.60:FF:000059">
    <property type="entry name" value="TGFB-induced factor homeobox 1"/>
    <property type="match status" value="1"/>
</dbReference>
<dbReference type="Gene3D" id="1.10.10.60">
    <property type="entry name" value="Homeodomain-like"/>
    <property type="match status" value="1"/>
</dbReference>
<dbReference type="InterPro" id="IPR001356">
    <property type="entry name" value="HD"/>
</dbReference>
<dbReference type="InterPro" id="IPR009057">
    <property type="entry name" value="Homeodomain-like_sf"/>
</dbReference>
<dbReference type="InterPro" id="IPR008422">
    <property type="entry name" value="KN_HD"/>
</dbReference>
<dbReference type="InterPro" id="IPR050224">
    <property type="entry name" value="TALE_homeobox"/>
</dbReference>
<dbReference type="PANTHER" id="PTHR11850">
    <property type="entry name" value="HOMEOBOX PROTEIN TRANSCRIPTION FACTORS"/>
    <property type="match status" value="1"/>
</dbReference>
<dbReference type="Pfam" id="PF05920">
    <property type="entry name" value="Homeobox_KN"/>
    <property type="match status" value="1"/>
</dbReference>
<dbReference type="SMART" id="SM00389">
    <property type="entry name" value="HOX"/>
    <property type="match status" value="1"/>
</dbReference>
<dbReference type="SUPFAM" id="SSF46689">
    <property type="entry name" value="Homeodomain-like"/>
    <property type="match status" value="1"/>
</dbReference>
<dbReference type="PROSITE" id="PS50071">
    <property type="entry name" value="HOMEOBOX_2"/>
    <property type="match status" value="1"/>
</dbReference>